<reference key="1">
    <citation type="journal article" date="2002" name="J. Mol. Microbiol. Biotechnol.">
        <title>The genome of Methanosarcina mazei: evidence for lateral gene transfer between Bacteria and Archaea.</title>
        <authorList>
            <person name="Deppenmeier U."/>
            <person name="Johann A."/>
            <person name="Hartsch T."/>
            <person name="Merkl R."/>
            <person name="Schmitz R.A."/>
            <person name="Martinez-Arias R."/>
            <person name="Henne A."/>
            <person name="Wiezer A."/>
            <person name="Baeumer S."/>
            <person name="Jacobi C."/>
            <person name="Brueggemann H."/>
            <person name="Lienard T."/>
            <person name="Christmann A."/>
            <person name="Boemecke M."/>
            <person name="Steckel S."/>
            <person name="Bhattacharyya A."/>
            <person name="Lykidis A."/>
            <person name="Overbeek R."/>
            <person name="Klenk H.-P."/>
            <person name="Gunsalus R.P."/>
            <person name="Fritz H.-J."/>
            <person name="Gottschalk G."/>
        </authorList>
    </citation>
    <scope>NUCLEOTIDE SEQUENCE [LARGE SCALE GENOMIC DNA]</scope>
    <source>
        <strain>ATCC BAA-159 / DSM 3647 / Goe1 / Go1 / JCM 11833 / OCM 88</strain>
    </source>
</reference>
<evidence type="ECO:0000255" key="1">
    <source>
        <dbReference type="HAMAP-Rule" id="MF_00032"/>
    </source>
</evidence>
<accession>Q8PYQ3</accession>
<organism>
    <name type="scientific">Methanosarcina mazei (strain ATCC BAA-159 / DSM 3647 / Goe1 / Go1 / JCM 11833 / OCM 88)</name>
    <name type="common">Methanosarcina frisia</name>
    <dbReference type="NCBI Taxonomy" id="192952"/>
    <lineage>
        <taxon>Archaea</taxon>
        <taxon>Methanobacteriati</taxon>
        <taxon>Methanobacteriota</taxon>
        <taxon>Stenosarchaea group</taxon>
        <taxon>Methanomicrobia</taxon>
        <taxon>Methanosarcinales</taxon>
        <taxon>Methanosarcinaceae</taxon>
        <taxon>Methanosarcina</taxon>
    </lineage>
</organism>
<name>IF6_METMA</name>
<sequence>MIRTVDIYDTSIIGVFATCTEDLALVPPLTKPEVCTILEEALDVRVVETLINGSTVVGALSRGNSNGFLLPYGSSVEEMQKRTGVPAGILPDRLNAVGNIVLANDSAALVHPELSDRALEIIARTLKVEVYRGTIAGIKNVGMAGVVTNKGLLVHPKVTVSEREALEEIFGLPVNIGTTNFGTQMLGSGLLANSKNFVAGSETTGPELGRIEEALGFLE</sequence>
<keyword id="KW-0396">Initiation factor</keyword>
<keyword id="KW-0648">Protein biosynthesis</keyword>
<feature type="chain" id="PRO_0000153748" description="Translation initiation factor 6">
    <location>
        <begin position="1"/>
        <end position="219"/>
    </location>
</feature>
<dbReference type="EMBL" id="AE008384">
    <property type="protein sequence ID" value="AAM30503.1"/>
    <property type="molecule type" value="Genomic_DNA"/>
</dbReference>
<dbReference type="RefSeq" id="WP_011032757.1">
    <property type="nucleotide sequence ID" value="NC_003901.1"/>
</dbReference>
<dbReference type="SMR" id="Q8PYQ3"/>
<dbReference type="KEGG" id="mma:MM_0807"/>
<dbReference type="PATRIC" id="fig|192952.21.peg.956"/>
<dbReference type="eggNOG" id="arCOG04176">
    <property type="taxonomic scope" value="Archaea"/>
</dbReference>
<dbReference type="HOGENOM" id="CLU_071894_1_0_2"/>
<dbReference type="Proteomes" id="UP000000595">
    <property type="component" value="Chromosome"/>
</dbReference>
<dbReference type="GO" id="GO:0043022">
    <property type="term" value="F:ribosome binding"/>
    <property type="evidence" value="ECO:0007669"/>
    <property type="project" value="InterPro"/>
</dbReference>
<dbReference type="GO" id="GO:0003743">
    <property type="term" value="F:translation initiation factor activity"/>
    <property type="evidence" value="ECO:0007669"/>
    <property type="project" value="UniProtKB-UniRule"/>
</dbReference>
<dbReference type="GO" id="GO:0042256">
    <property type="term" value="P:cytosolic ribosome assembly"/>
    <property type="evidence" value="ECO:0007669"/>
    <property type="project" value="InterPro"/>
</dbReference>
<dbReference type="CDD" id="cd00527">
    <property type="entry name" value="IF6"/>
    <property type="match status" value="1"/>
</dbReference>
<dbReference type="Gene3D" id="3.75.10.10">
    <property type="entry name" value="L-arginine/glycine Amidinotransferase, Chain A"/>
    <property type="match status" value="1"/>
</dbReference>
<dbReference type="HAMAP" id="MF_00032">
    <property type="entry name" value="eIF_6"/>
    <property type="match status" value="1"/>
</dbReference>
<dbReference type="InterPro" id="IPR002769">
    <property type="entry name" value="eIF6"/>
</dbReference>
<dbReference type="NCBIfam" id="TIGR00323">
    <property type="entry name" value="eIF-6"/>
    <property type="match status" value="1"/>
</dbReference>
<dbReference type="NCBIfam" id="NF003130">
    <property type="entry name" value="PRK04046.2-1"/>
    <property type="match status" value="1"/>
</dbReference>
<dbReference type="PANTHER" id="PTHR10784">
    <property type="entry name" value="TRANSLATION INITIATION FACTOR 6"/>
    <property type="match status" value="1"/>
</dbReference>
<dbReference type="Pfam" id="PF01912">
    <property type="entry name" value="eIF-6"/>
    <property type="match status" value="1"/>
</dbReference>
<dbReference type="PIRSF" id="PIRSF006413">
    <property type="entry name" value="IF-6"/>
    <property type="match status" value="1"/>
</dbReference>
<dbReference type="SMART" id="SM00654">
    <property type="entry name" value="eIF6"/>
    <property type="match status" value="1"/>
</dbReference>
<dbReference type="SUPFAM" id="SSF55909">
    <property type="entry name" value="Pentein"/>
    <property type="match status" value="1"/>
</dbReference>
<protein>
    <recommendedName>
        <fullName evidence="1">Translation initiation factor 6</fullName>
        <shortName evidence="1">aIF-6</shortName>
    </recommendedName>
</protein>
<comment type="function">
    <text evidence="1">Binds to the 50S ribosomal subunit and prevents its association with the 30S ribosomal subunit to form the 70S initiation complex.</text>
</comment>
<comment type="similarity">
    <text evidence="1">Belongs to the eIF-6 family.</text>
</comment>
<gene>
    <name evidence="1" type="primary">eif6</name>
    <name type="ordered locus">MM_0807</name>
</gene>
<proteinExistence type="inferred from homology"/>